<organism>
    <name type="scientific">Escherichia coli (strain UTI89 / UPEC)</name>
    <dbReference type="NCBI Taxonomy" id="364106"/>
    <lineage>
        <taxon>Bacteria</taxon>
        <taxon>Pseudomonadati</taxon>
        <taxon>Pseudomonadota</taxon>
        <taxon>Gammaproteobacteria</taxon>
        <taxon>Enterobacterales</taxon>
        <taxon>Enterobacteriaceae</taxon>
        <taxon>Escherichia</taxon>
    </lineage>
</organism>
<sequence>MERLLIVNADDFGLSKGQNYGIIEACRNGIVTSTTALVNGQAIDHAVQLSRDEPSLAIGMHFVLTMGKPLTAMPGLTRDGVLGKWIWQLAEEGALPLEEITQELASQYLRFIELFGRKPTHLDSHHHVHMFPQIFPIVAKFAAEEGIALRIDRQPLSNDGDLPANLRSSQGFSSAFYGEEISETLFLQVLDDSSHRGERSLEVMCHPAFVDNTIRQSAYCFPRLTELDVLTSASLKYAIAERGYLLGSYHDV</sequence>
<accession>Q1RB62</accession>
<gene>
    <name evidence="1" type="primary">chbG</name>
    <name type="ordered locus">UTI89_C1926</name>
</gene>
<proteinExistence type="inferred from homology"/>
<feature type="chain" id="PRO_1000067082" description="Chitooligosaccharide deacetylase">
    <location>
        <begin position="1"/>
        <end position="252"/>
    </location>
</feature>
<feature type="binding site" evidence="1">
    <location>
        <position position="61"/>
    </location>
    <ligand>
        <name>Mg(2+)</name>
        <dbReference type="ChEBI" id="CHEBI:18420"/>
    </ligand>
</feature>
<feature type="binding site" evidence="1">
    <location>
        <position position="125"/>
    </location>
    <ligand>
        <name>Mg(2+)</name>
        <dbReference type="ChEBI" id="CHEBI:18420"/>
    </ligand>
</feature>
<reference key="1">
    <citation type="journal article" date="2006" name="Proc. Natl. Acad. Sci. U.S.A.">
        <title>Identification of genes subject to positive selection in uropathogenic strains of Escherichia coli: a comparative genomics approach.</title>
        <authorList>
            <person name="Chen S.L."/>
            <person name="Hung C.-S."/>
            <person name="Xu J."/>
            <person name="Reigstad C.S."/>
            <person name="Magrini V."/>
            <person name="Sabo A."/>
            <person name="Blasiar D."/>
            <person name="Bieri T."/>
            <person name="Meyer R.R."/>
            <person name="Ozersky P."/>
            <person name="Armstrong J.R."/>
            <person name="Fulton R.S."/>
            <person name="Latreille J.P."/>
            <person name="Spieth J."/>
            <person name="Hooton T.M."/>
            <person name="Mardis E.R."/>
            <person name="Hultgren S.J."/>
            <person name="Gordon J.I."/>
        </authorList>
    </citation>
    <scope>NUCLEOTIDE SEQUENCE [LARGE SCALE GENOMIC DNA]</scope>
    <source>
        <strain>UTI89 / UPEC</strain>
    </source>
</reference>
<keyword id="KW-0119">Carbohydrate metabolism</keyword>
<keyword id="KW-0146">Chitin degradation</keyword>
<keyword id="KW-0963">Cytoplasm</keyword>
<keyword id="KW-0378">Hydrolase</keyword>
<keyword id="KW-0460">Magnesium</keyword>
<keyword id="KW-0479">Metal-binding</keyword>
<keyword id="KW-0624">Polysaccharide degradation</keyword>
<comment type="function">
    <text evidence="1">Involved in the degradation of chitin. ChbG is essential for growth on the acetylated chitooligosaccharides chitobiose and chitotriose but is dispensable for growth on cellobiose and chitosan dimer, the deacetylated form of chitobiose. Deacetylation of chitobiose-6-P and chitotriose-6-P is necessary for both the activation of the chb promoter by the regulatory protein ChbR and the hydrolysis of phosphorylated beta-glucosides by the phospho-beta-glucosidase ChbF. Catalyzes the removal of only one acetyl group from chitobiose-6-P to yield monoacetylchitobiose-6-P, the inducer of ChbR and the substrate of ChbF.</text>
</comment>
<comment type="catalytic activity">
    <reaction evidence="1">
        <text>N,N'-diacetylchitobiose + H2O = N-acetyl-beta-D-glucosaminyl-(1-&gt;4)-D-glucosamine + acetate</text>
        <dbReference type="Rhea" id="RHEA:27469"/>
        <dbReference type="ChEBI" id="CHEBI:15377"/>
        <dbReference type="ChEBI" id="CHEBI:28681"/>
        <dbReference type="ChEBI" id="CHEBI:30089"/>
        <dbReference type="ChEBI" id="CHEBI:59910"/>
        <dbReference type="EC" id="3.5.1.105"/>
    </reaction>
</comment>
<comment type="catalytic activity">
    <reaction evidence="1">
        <text>diacetylchitobiose-6'-phosphate + H2O = N'-monoacetylchitobiose-6'-phosphate + acetate</text>
        <dbReference type="Rhea" id="RHEA:35083"/>
        <dbReference type="ChEBI" id="CHEBI:15377"/>
        <dbReference type="ChEBI" id="CHEBI:30089"/>
        <dbReference type="ChEBI" id="CHEBI:64883"/>
        <dbReference type="ChEBI" id="CHEBI:71315"/>
    </reaction>
</comment>
<comment type="cofactor">
    <cofactor evidence="1">
        <name>Mg(2+)</name>
        <dbReference type="ChEBI" id="CHEBI:18420"/>
    </cofactor>
</comment>
<comment type="pathway">
    <text evidence="1">Glycan degradation; chitin degradation.</text>
</comment>
<comment type="subunit">
    <text evidence="1">Homodimer.</text>
</comment>
<comment type="subcellular location">
    <subcellularLocation>
        <location evidence="1">Cytoplasm</location>
    </subcellularLocation>
</comment>
<comment type="similarity">
    <text evidence="1">Belongs to the YdjC deacetylase family. ChbG subfamily.</text>
</comment>
<protein>
    <recommendedName>
        <fullName evidence="1">Chitooligosaccharide deacetylase</fullName>
        <shortName evidence="1">COD</shortName>
        <ecNumber evidence="1">3.5.1.105</ecNumber>
    </recommendedName>
    <alternativeName>
        <fullName evidence="1">Chitin disaccharide deacetylase</fullName>
    </alternativeName>
    <alternativeName>
        <fullName evidence="1">Chitobiose deacetylase</fullName>
    </alternativeName>
    <alternativeName>
        <fullName evidence="1">Chitobiose-6P deacetylase</fullName>
    </alternativeName>
    <alternativeName>
        <fullName evidence="1">Chitotriose deacetylase</fullName>
    </alternativeName>
    <alternativeName>
        <fullName evidence="1">Chitotriose-6P deacetylase</fullName>
    </alternativeName>
</protein>
<evidence type="ECO:0000255" key="1">
    <source>
        <dbReference type="HAMAP-Rule" id="MF_01246"/>
    </source>
</evidence>
<dbReference type="EC" id="3.5.1.105" evidence="1"/>
<dbReference type="EMBL" id="CP000243">
    <property type="protein sequence ID" value="ABE07402.1"/>
    <property type="molecule type" value="Genomic_DNA"/>
</dbReference>
<dbReference type="RefSeq" id="WP_000440473.1">
    <property type="nucleotide sequence ID" value="NZ_CP064825.1"/>
</dbReference>
<dbReference type="SMR" id="Q1RB62"/>
<dbReference type="KEGG" id="eci:UTI89_C1926"/>
<dbReference type="HOGENOM" id="CLU_064244_4_1_6"/>
<dbReference type="UniPathway" id="UPA00349"/>
<dbReference type="Proteomes" id="UP000001952">
    <property type="component" value="Chromosome"/>
</dbReference>
<dbReference type="GO" id="GO:0005737">
    <property type="term" value="C:cytoplasm"/>
    <property type="evidence" value="ECO:0007669"/>
    <property type="project" value="UniProtKB-SubCell"/>
</dbReference>
<dbReference type="GO" id="GO:0036311">
    <property type="term" value="F:chitin disaccharide deacetylase activity"/>
    <property type="evidence" value="ECO:0007669"/>
    <property type="project" value="UniProtKB-UniRule"/>
</dbReference>
<dbReference type="GO" id="GO:0019213">
    <property type="term" value="F:deacetylase activity"/>
    <property type="evidence" value="ECO:0007669"/>
    <property type="project" value="TreeGrafter"/>
</dbReference>
<dbReference type="GO" id="GO:0046872">
    <property type="term" value="F:metal ion binding"/>
    <property type="evidence" value="ECO:0007669"/>
    <property type="project" value="UniProtKB-KW"/>
</dbReference>
<dbReference type="GO" id="GO:0006032">
    <property type="term" value="P:chitin catabolic process"/>
    <property type="evidence" value="ECO:0007669"/>
    <property type="project" value="UniProtKB-UniPathway"/>
</dbReference>
<dbReference type="GO" id="GO:0052777">
    <property type="term" value="P:diacetylchitobiose catabolic process"/>
    <property type="evidence" value="ECO:0007669"/>
    <property type="project" value="UniProtKB-UniRule"/>
</dbReference>
<dbReference type="GO" id="GO:0000272">
    <property type="term" value="P:polysaccharide catabolic process"/>
    <property type="evidence" value="ECO:0007669"/>
    <property type="project" value="UniProtKB-UniRule"/>
</dbReference>
<dbReference type="CDD" id="cd10803">
    <property type="entry name" value="YdjC_EF3048_like"/>
    <property type="match status" value="1"/>
</dbReference>
<dbReference type="FunFam" id="3.20.20.370:FF:000001">
    <property type="entry name" value="Chitooligosaccharide deacetylase"/>
    <property type="match status" value="1"/>
</dbReference>
<dbReference type="Gene3D" id="3.20.20.370">
    <property type="entry name" value="Glycoside hydrolase/deacetylase"/>
    <property type="match status" value="1"/>
</dbReference>
<dbReference type="HAMAP" id="MF_01246">
    <property type="entry name" value="COD"/>
    <property type="match status" value="1"/>
</dbReference>
<dbReference type="InterPro" id="IPR022948">
    <property type="entry name" value="COD_ChbG_bac"/>
</dbReference>
<dbReference type="InterPro" id="IPR011330">
    <property type="entry name" value="Glyco_hydro/deAcase_b/a-brl"/>
</dbReference>
<dbReference type="InterPro" id="IPR006879">
    <property type="entry name" value="YdjC-like"/>
</dbReference>
<dbReference type="NCBIfam" id="NF002559">
    <property type="entry name" value="PRK02134.1"/>
    <property type="match status" value="1"/>
</dbReference>
<dbReference type="PANTHER" id="PTHR31609:SF1">
    <property type="entry name" value="CARBOHYDRATE DEACETYLASE"/>
    <property type="match status" value="1"/>
</dbReference>
<dbReference type="PANTHER" id="PTHR31609">
    <property type="entry name" value="YDJC DEACETYLASE FAMILY MEMBER"/>
    <property type="match status" value="1"/>
</dbReference>
<dbReference type="Pfam" id="PF04794">
    <property type="entry name" value="YdjC"/>
    <property type="match status" value="1"/>
</dbReference>
<dbReference type="SUPFAM" id="SSF88713">
    <property type="entry name" value="Glycoside hydrolase/deacetylase"/>
    <property type="match status" value="1"/>
</dbReference>
<name>CHBG_ECOUT</name>